<accession>Q53WG9</accession>
<gene>
    <name type="primary">cse3</name>
    <name evidence="3" type="synonym">cas6</name>
    <name type="ordered locus">TTHB192</name>
</gene>
<reference key="1">
    <citation type="submission" date="2004-11" db="EMBL/GenBank/DDBJ databases">
        <title>Complete genome sequence of Thermus thermophilus HB8.</title>
        <authorList>
            <person name="Masui R."/>
            <person name="Kurokawa K."/>
            <person name="Nakagawa N."/>
            <person name="Tokunaga F."/>
            <person name="Koyama Y."/>
            <person name="Shibata T."/>
            <person name="Oshima T."/>
            <person name="Yokoyama S."/>
            <person name="Yasunaga T."/>
            <person name="Kuramitsu S."/>
        </authorList>
    </citation>
    <scope>NUCLEOTIDE SEQUENCE [LARGE SCALE GENOMIC DNA]</scope>
    <source>
        <strain>ATCC 27634 / DSM 579 / HB8</strain>
    </source>
</reference>
<reference key="2">
    <citation type="journal article" date="2006" name="Protein Sci.">
        <title>Crystal structure of hypothetical protein TTHB192 from Thermus thermophilus HB8 reveals a new protein family with an RNA recognition motif-like domain.</title>
        <authorList>
            <person name="Ebihara A."/>
            <person name="Yao M."/>
            <person name="Masui R."/>
            <person name="Tanaka I."/>
            <person name="Yokoyama S."/>
            <person name="Kuramitsu S."/>
        </authorList>
    </citation>
    <scope>X-RAY CRYSTALLOGRAPHY (1.90 ANGSTROMS)</scope>
    <source>
        <strain>ATCC 27634 / DSM 579 / HB8</strain>
    </source>
</reference>
<reference key="3">
    <citation type="journal article" date="2011" name="Nat. Struct. Mol. Biol.">
        <title>An RNA-induced conformational change required for CRISPR RNA cleavage by the endoribonuclease Cse3.</title>
        <authorList>
            <person name="Sashital D.G."/>
            <person name="Jinek M."/>
            <person name="Doudna J.A."/>
        </authorList>
    </citation>
    <scope>X-RAY CRYSTALLOGRAPHY (1.44 ANGSTROMS) IN COMPLEX WITH RNA</scope>
    <scope>FUNCTION AS AN ENDORIBONUCLEASE</scope>
    <scope>SUBUNIT</scope>
    <scope>RNA-BINDING</scope>
    <scope>MUTAGENESIS OF TYR-23; GLU-24; HIS-26; ARG-27; SER-34; GLU-38; ASN-102; ARG-158 AND LYS-160</scope>
    <source>
        <strain>ATCC 27634 / DSM 579 / HB8</strain>
    </source>
</reference>
<reference key="4">
    <citation type="journal article" date="2011" name="Nat. Struct. Mol. Biol.">
        <title>Recognition and maturation of effector RNAs in a CRISPR interference pathway.</title>
        <authorList>
            <person name="Gesner E.M."/>
            <person name="Schellenberg M.J."/>
            <person name="Garside E.L."/>
            <person name="George M.M."/>
            <person name="Macmillan A.M."/>
        </authorList>
    </citation>
    <scope>X-RAY CRYSTALLOGRAPHY (2.35 ANGSTROMS) IN COMPLEX WITH RNA</scope>
    <scope>FUNCTION AS AN ENDORIBONUCLEASE</scope>
    <scope>SUBUNIT</scope>
    <scope>RNA-BINDING</scope>
    <scope>MUTAGENESIS OF TYR-23; ARG-27; ARG-157 AND ARG-158</scope>
    <source>
        <strain>ATCC 27634 / DSM 579 / HB8</strain>
    </source>
</reference>
<feature type="chain" id="PRO_0000417969" description="CRISPR-associated endoribonuclease Cse3">
    <location>
        <begin position="1"/>
        <end position="211"/>
    </location>
</feature>
<feature type="site" description="Stabilizes transition-state intermediate" evidence="3">
    <location>
        <position position="23"/>
    </location>
</feature>
<feature type="mutagenesis site" description="97% loss of cleavage activity." evidence="1 2">
    <original>Y</original>
    <variation>F</variation>
    <location>
        <position position="23"/>
    </location>
</feature>
<feature type="mutagenesis site" description="71% loss of cleavage activity." evidence="1">
    <original>E</original>
    <variation>A</variation>
    <location>
        <position position="24"/>
    </location>
</feature>
<feature type="mutagenesis site" description="99.8% loss of cleavage activity, binds RNA normally." evidence="1">
    <original>H</original>
    <variation>A</variation>
    <location>
        <position position="26"/>
    </location>
</feature>
<feature type="mutagenesis site" description="86% loss of cleavage activity." evidence="1 2">
    <original>R</original>
    <variation>A</variation>
    <location>
        <position position="27"/>
    </location>
</feature>
<feature type="mutagenesis site" description="41% loss of cleavage activity." evidence="1">
    <original>S</original>
    <variation>A</variation>
    <location>
        <position position="34"/>
    </location>
</feature>
<feature type="mutagenesis site" description="No effect." evidence="1">
    <original>E</original>
    <variation>A</variation>
    <location>
        <position position="38"/>
    </location>
</feature>
<feature type="mutagenesis site" description="No effect on cleavage, increases enzyme turnover." evidence="1">
    <original>N</original>
    <variation>A</variation>
    <location>
        <position position="102"/>
    </location>
</feature>
<feature type="mutagenesis site" description="85% loss of cleavage activity." evidence="2">
    <original>R</original>
    <variation>A</variation>
    <location>
        <position position="157"/>
    </location>
</feature>
<feature type="mutagenesis site" description="64% loss of cleavage activity (PubMed:21572442); 99% loss of cleavage activity (PubMed:21572444)." evidence="1 2">
    <original>R</original>
    <variation>A</variation>
    <location>
        <position position="158"/>
    </location>
</feature>
<feature type="mutagenesis site" description="45% loss of cleavage activity." evidence="1">
    <original>K</original>
    <variation>A</variation>
    <location>
        <position position="160"/>
    </location>
</feature>
<feature type="strand" evidence="5">
    <location>
        <begin position="1"/>
        <end position="8"/>
    </location>
</feature>
<feature type="helix" evidence="5">
    <location>
        <begin position="13"/>
        <end position="20"/>
    </location>
</feature>
<feature type="helix" evidence="5">
    <location>
        <begin position="22"/>
        <end position="30"/>
    </location>
</feature>
<feature type="helix" evidence="5">
    <location>
        <begin position="31"/>
        <end position="33"/>
    </location>
</feature>
<feature type="helix" evidence="5">
    <location>
        <begin position="34"/>
        <end position="38"/>
    </location>
</feature>
<feature type="strand" evidence="5">
    <location>
        <begin position="45"/>
        <end position="48"/>
    </location>
</feature>
<feature type="strand" evidence="4">
    <location>
        <begin position="52"/>
        <end position="54"/>
    </location>
</feature>
<feature type="strand" evidence="5">
    <location>
        <begin position="58"/>
        <end position="65"/>
    </location>
</feature>
<feature type="helix" evidence="5">
    <location>
        <begin position="69"/>
        <end position="71"/>
    </location>
</feature>
<feature type="strand" evidence="5">
    <location>
        <begin position="76"/>
        <end position="79"/>
    </location>
</feature>
<feature type="strand" evidence="5">
    <location>
        <begin position="83"/>
        <end position="85"/>
    </location>
</feature>
<feature type="strand" evidence="5">
    <location>
        <begin position="94"/>
        <end position="101"/>
    </location>
</feature>
<feature type="strand" evidence="5">
    <location>
        <begin position="104"/>
        <end position="106"/>
    </location>
</feature>
<feature type="turn" evidence="5">
    <location>
        <begin position="108"/>
        <end position="110"/>
    </location>
</feature>
<feature type="strand" evidence="5">
    <location>
        <begin position="113"/>
        <end position="115"/>
    </location>
</feature>
<feature type="helix" evidence="5">
    <location>
        <begin position="119"/>
        <end position="132"/>
    </location>
</feature>
<feature type="strand" evidence="5">
    <location>
        <begin position="135"/>
        <end position="137"/>
    </location>
</feature>
<feature type="strand" evidence="5">
    <location>
        <begin position="143"/>
        <end position="156"/>
    </location>
</feature>
<feature type="turn" evidence="6">
    <location>
        <begin position="161"/>
        <end position="163"/>
    </location>
</feature>
<feature type="strand" evidence="5">
    <location>
        <begin position="169"/>
        <end position="183"/>
    </location>
</feature>
<feature type="helix" evidence="5">
    <location>
        <begin position="185"/>
        <end position="194"/>
    </location>
</feature>
<feature type="strand" evidence="5">
    <location>
        <begin position="196"/>
        <end position="198"/>
    </location>
</feature>
<feature type="helix" evidence="5">
    <location>
        <begin position="200"/>
        <end position="202"/>
    </location>
</feature>
<feature type="strand" evidence="5">
    <location>
        <begin position="207"/>
        <end position="210"/>
    </location>
</feature>
<name>CAS6_THET8</name>
<protein>
    <recommendedName>
        <fullName>CRISPR-associated endoribonuclease Cse3</fullName>
        <ecNumber>3.1.-.-</ecNumber>
    </recommendedName>
    <alternativeName>
        <fullName>Cse3 endoRNase</fullName>
    </alternativeName>
    <alternativeName>
        <fullName>Cse3 endoribonuclease</fullName>
    </alternativeName>
</protein>
<organism>
    <name type="scientific">Thermus thermophilus (strain ATCC 27634 / DSM 579 / HB8)</name>
    <dbReference type="NCBI Taxonomy" id="300852"/>
    <lineage>
        <taxon>Bacteria</taxon>
        <taxon>Thermotogati</taxon>
        <taxon>Deinococcota</taxon>
        <taxon>Deinococci</taxon>
        <taxon>Thermales</taxon>
        <taxon>Thermaceae</taxon>
        <taxon>Thermus</taxon>
    </lineage>
</organism>
<dbReference type="EC" id="3.1.-.-"/>
<dbReference type="EMBL" id="AP008227">
    <property type="protein sequence ID" value="BAD71988.1"/>
    <property type="molecule type" value="Genomic_DNA"/>
</dbReference>
<dbReference type="RefSeq" id="YP_145431.1">
    <property type="nucleotide sequence ID" value="NC_006462.1"/>
</dbReference>
<dbReference type="PDB" id="1WJ9">
    <property type="method" value="X-ray"/>
    <property type="resolution" value="1.90 A"/>
    <property type="chains" value="A=1-211"/>
</dbReference>
<dbReference type="PDB" id="2Y8W">
    <property type="method" value="X-ray"/>
    <property type="resolution" value="1.80 A"/>
    <property type="chains" value="A=1-211"/>
</dbReference>
<dbReference type="PDB" id="2Y8Y">
    <property type="method" value="X-ray"/>
    <property type="resolution" value="1.44 A"/>
    <property type="chains" value="A=1-211"/>
</dbReference>
<dbReference type="PDB" id="2Y9H">
    <property type="method" value="X-ray"/>
    <property type="resolution" value="2.50 A"/>
    <property type="chains" value="A/C/E/G/I/K/M/O=1-211"/>
</dbReference>
<dbReference type="PDB" id="3QRP">
    <property type="method" value="X-ray"/>
    <property type="resolution" value="2.35 A"/>
    <property type="chains" value="A=1-211"/>
</dbReference>
<dbReference type="PDB" id="3QRQ">
    <property type="method" value="X-ray"/>
    <property type="resolution" value="3.19 A"/>
    <property type="chains" value="A=1-211"/>
</dbReference>
<dbReference type="PDB" id="3QRR">
    <property type="method" value="X-ray"/>
    <property type="resolution" value="3.10 A"/>
    <property type="chains" value="A=1-211"/>
</dbReference>
<dbReference type="PDBsum" id="1WJ9"/>
<dbReference type="PDBsum" id="2Y8W"/>
<dbReference type="PDBsum" id="2Y8Y"/>
<dbReference type="PDBsum" id="2Y9H"/>
<dbReference type="PDBsum" id="3QRP"/>
<dbReference type="PDBsum" id="3QRQ"/>
<dbReference type="PDBsum" id="3QRR"/>
<dbReference type="SMR" id="Q53WG9"/>
<dbReference type="EnsemblBacteria" id="BAD71988">
    <property type="protein sequence ID" value="BAD71988"/>
    <property type="gene ID" value="BAD71988"/>
</dbReference>
<dbReference type="GeneID" id="3167898"/>
<dbReference type="KEGG" id="ttj:TTHB192"/>
<dbReference type="PATRIC" id="fig|300852.9.peg.2143"/>
<dbReference type="HOGENOM" id="CLU_080982_0_0_0"/>
<dbReference type="PhylomeDB" id="Q53WG9"/>
<dbReference type="EvolutionaryTrace" id="Q53WG9"/>
<dbReference type="Proteomes" id="UP000000532">
    <property type="component" value="Plasmid pTT27"/>
</dbReference>
<dbReference type="GO" id="GO:0004519">
    <property type="term" value="F:endonuclease activity"/>
    <property type="evidence" value="ECO:0007669"/>
    <property type="project" value="UniProtKB-KW"/>
</dbReference>
<dbReference type="GO" id="GO:0003723">
    <property type="term" value="F:RNA binding"/>
    <property type="evidence" value="ECO:0007669"/>
    <property type="project" value="UniProtKB-KW"/>
</dbReference>
<dbReference type="GO" id="GO:0051607">
    <property type="term" value="P:defense response to virus"/>
    <property type="evidence" value="ECO:0007669"/>
    <property type="project" value="UniProtKB-KW"/>
</dbReference>
<dbReference type="Gene3D" id="3.30.70.1200">
    <property type="entry name" value="Crispr-associated protein, domain 1"/>
    <property type="match status" value="1"/>
</dbReference>
<dbReference type="Gene3D" id="3.30.70.1210">
    <property type="entry name" value="Crispr-associated protein, domain 2"/>
    <property type="match status" value="1"/>
</dbReference>
<dbReference type="InterPro" id="IPR010179">
    <property type="entry name" value="CRISPR-assoc_prot_Cse3"/>
</dbReference>
<dbReference type="NCBIfam" id="TIGR01907">
    <property type="entry name" value="casE_Cse3"/>
    <property type="match status" value="1"/>
</dbReference>
<dbReference type="Pfam" id="PF08798">
    <property type="entry name" value="CRISPR_assoc"/>
    <property type="match status" value="1"/>
</dbReference>
<dbReference type="SMART" id="SM01101">
    <property type="entry name" value="CRISPR_assoc"/>
    <property type="match status" value="1"/>
</dbReference>
<dbReference type="SUPFAM" id="SSF117987">
    <property type="entry name" value="CRISPR-associated protein"/>
    <property type="match status" value="2"/>
</dbReference>
<sequence>MWLTKLVLNPASRAARRDLANPYEMHRTLSKAVSRALEEGRERLLWRLEPARGLEPPVVLVQTLTEPDWSVLDEGYAQVFPPKPFHPALKPGQRLRFRLRANPAKRLAATGKRVALKTPAEKVAWLERRLEEGGFRLLEGERGPWVQILQDTFLEVRRKKDGEEAGKLLQVQAVLFEGRLEVVDPERALATLRRGVGPGKALGLGLLSVAP</sequence>
<evidence type="ECO:0000269" key="1">
    <source>
    </source>
</evidence>
<evidence type="ECO:0000269" key="2">
    <source>
    </source>
</evidence>
<evidence type="ECO:0000305" key="3"/>
<evidence type="ECO:0007829" key="4">
    <source>
        <dbReference type="PDB" id="2Y8W"/>
    </source>
</evidence>
<evidence type="ECO:0007829" key="5">
    <source>
        <dbReference type="PDB" id="2Y8Y"/>
    </source>
</evidence>
<evidence type="ECO:0007829" key="6">
    <source>
        <dbReference type="PDB" id="3QRP"/>
    </source>
</evidence>
<proteinExistence type="evidence at protein level"/>
<keyword id="KW-0002">3D-structure</keyword>
<keyword id="KW-0051">Antiviral defense</keyword>
<keyword id="KW-0255">Endonuclease</keyword>
<keyword id="KW-0378">Hydrolase</keyword>
<keyword id="KW-0540">Nuclease</keyword>
<keyword id="KW-0614">Plasmid</keyword>
<keyword id="KW-1185">Reference proteome</keyword>
<keyword id="KW-0694">RNA-binding</keyword>
<comment type="function">
    <text evidence="1 2">CRISPR (clustered regularly interspaced short palindromic repeat), is an adaptive immune system that provides protection against mobile genetic elements (viruses, transposable elements and conjugative plasmids). CRISPR clusters contain sequences complementary to antecedent mobile elements and target invading nucleic acids. CRISPR clusters are transcribed and processed into CRISPR RNA (crRNA). This enzyme processes pre-crRNA into individual crRNA units, but may not actually undergo enzyme turnover, retaining the crRNA product (PubMed:21572442). Generates a 2',3'-cyclic phosphodiester.</text>
</comment>
<comment type="subunit">
    <text evidence="1 2 3">Probably part of the Cascade ribonucleoprotein complex (Probable). Monomer, retains crRNA after it is processed.</text>
</comment>
<comment type="similarity">
    <text evidence="3">Belongs to the CRISPR-associated protein Cas6/Cse3/CasE family. Subtype I-E/Ecoli subfamily.</text>
</comment>
<geneLocation type="plasmid">
    <name>pTT27</name>
</geneLocation>